<reference key="1">
    <citation type="submission" date="2007-06" db="EMBL/GenBank/DDBJ databases">
        <title>Complete sequence of Clostridium beijerinckii NCIMB 8052.</title>
        <authorList>
            <consortium name="US DOE Joint Genome Institute"/>
            <person name="Copeland A."/>
            <person name="Lucas S."/>
            <person name="Lapidus A."/>
            <person name="Barry K."/>
            <person name="Detter J.C."/>
            <person name="Glavina del Rio T."/>
            <person name="Hammon N."/>
            <person name="Israni S."/>
            <person name="Dalin E."/>
            <person name="Tice H."/>
            <person name="Pitluck S."/>
            <person name="Sims D."/>
            <person name="Brettin T."/>
            <person name="Bruce D."/>
            <person name="Tapia R."/>
            <person name="Brainard J."/>
            <person name="Schmutz J."/>
            <person name="Larimer F."/>
            <person name="Land M."/>
            <person name="Hauser L."/>
            <person name="Kyrpides N."/>
            <person name="Mikhailova N."/>
            <person name="Bennet G."/>
            <person name="Cann I."/>
            <person name="Chen J.-S."/>
            <person name="Contreras A.L."/>
            <person name="Jones D."/>
            <person name="Kashket E."/>
            <person name="Mitchell W."/>
            <person name="Stoddard S."/>
            <person name="Schwarz W."/>
            <person name="Qureshi N."/>
            <person name="Young M."/>
            <person name="Shi Z."/>
            <person name="Ezeji T."/>
            <person name="White B."/>
            <person name="Blaschek H."/>
            <person name="Richardson P."/>
        </authorList>
    </citation>
    <scope>NUCLEOTIDE SEQUENCE [LARGE SCALE GENOMIC DNA]</scope>
    <source>
        <strain>ATCC 51743 / NCIMB 8052</strain>
    </source>
</reference>
<dbReference type="EMBL" id="CP000721">
    <property type="protein sequence ID" value="ABR33358.1"/>
    <property type="molecule type" value="Genomic_DNA"/>
</dbReference>
<dbReference type="RefSeq" id="WP_008424801.1">
    <property type="nucleotide sequence ID" value="NC_009617.1"/>
</dbReference>
<dbReference type="SMR" id="A6LSM8"/>
<dbReference type="GeneID" id="66344166"/>
<dbReference type="KEGG" id="cbe:Cbei_1176"/>
<dbReference type="eggNOG" id="COG0228">
    <property type="taxonomic scope" value="Bacteria"/>
</dbReference>
<dbReference type="HOGENOM" id="CLU_100590_5_0_9"/>
<dbReference type="Proteomes" id="UP000000565">
    <property type="component" value="Chromosome"/>
</dbReference>
<dbReference type="GO" id="GO:0005737">
    <property type="term" value="C:cytoplasm"/>
    <property type="evidence" value="ECO:0007669"/>
    <property type="project" value="UniProtKB-ARBA"/>
</dbReference>
<dbReference type="GO" id="GO:0015935">
    <property type="term" value="C:small ribosomal subunit"/>
    <property type="evidence" value="ECO:0007669"/>
    <property type="project" value="TreeGrafter"/>
</dbReference>
<dbReference type="GO" id="GO:0003735">
    <property type="term" value="F:structural constituent of ribosome"/>
    <property type="evidence" value="ECO:0007669"/>
    <property type="project" value="InterPro"/>
</dbReference>
<dbReference type="GO" id="GO:0006412">
    <property type="term" value="P:translation"/>
    <property type="evidence" value="ECO:0007669"/>
    <property type="project" value="UniProtKB-UniRule"/>
</dbReference>
<dbReference type="Gene3D" id="3.30.1320.10">
    <property type="match status" value="1"/>
</dbReference>
<dbReference type="HAMAP" id="MF_00385">
    <property type="entry name" value="Ribosomal_bS16"/>
    <property type="match status" value="1"/>
</dbReference>
<dbReference type="InterPro" id="IPR000307">
    <property type="entry name" value="Ribosomal_bS16"/>
</dbReference>
<dbReference type="InterPro" id="IPR023803">
    <property type="entry name" value="Ribosomal_bS16_dom_sf"/>
</dbReference>
<dbReference type="NCBIfam" id="TIGR00002">
    <property type="entry name" value="S16"/>
    <property type="match status" value="1"/>
</dbReference>
<dbReference type="PANTHER" id="PTHR12919">
    <property type="entry name" value="30S RIBOSOMAL PROTEIN S16"/>
    <property type="match status" value="1"/>
</dbReference>
<dbReference type="PANTHER" id="PTHR12919:SF20">
    <property type="entry name" value="SMALL RIBOSOMAL SUBUNIT PROTEIN BS16M"/>
    <property type="match status" value="1"/>
</dbReference>
<dbReference type="Pfam" id="PF00886">
    <property type="entry name" value="Ribosomal_S16"/>
    <property type="match status" value="1"/>
</dbReference>
<dbReference type="SUPFAM" id="SSF54565">
    <property type="entry name" value="Ribosomal protein S16"/>
    <property type="match status" value="1"/>
</dbReference>
<gene>
    <name evidence="1" type="primary">rpsP</name>
    <name type="ordered locus">Cbei_1176</name>
</gene>
<comment type="similarity">
    <text evidence="1">Belongs to the bacterial ribosomal protein bS16 family.</text>
</comment>
<evidence type="ECO:0000255" key="1">
    <source>
        <dbReference type="HAMAP-Rule" id="MF_00385"/>
    </source>
</evidence>
<evidence type="ECO:0000305" key="2"/>
<proteinExistence type="inferred from homology"/>
<name>RS16_CLOB8</name>
<keyword id="KW-0687">Ribonucleoprotein</keyword>
<keyword id="KW-0689">Ribosomal protein</keyword>
<sequence length="81" mass="9235">MAVKIRLRRMGAKKAPFYRIIVADSRAPRDGKFIDEIGYYNPLTEPVEVKINEEKANEWLSNGAQPTEVVKRLFNNAGLTK</sequence>
<feature type="chain" id="PRO_1000080142" description="Small ribosomal subunit protein bS16">
    <location>
        <begin position="1"/>
        <end position="81"/>
    </location>
</feature>
<organism>
    <name type="scientific">Clostridium beijerinckii (strain ATCC 51743 / NCIMB 8052)</name>
    <name type="common">Clostridium acetobutylicum</name>
    <dbReference type="NCBI Taxonomy" id="290402"/>
    <lineage>
        <taxon>Bacteria</taxon>
        <taxon>Bacillati</taxon>
        <taxon>Bacillota</taxon>
        <taxon>Clostridia</taxon>
        <taxon>Eubacteriales</taxon>
        <taxon>Clostridiaceae</taxon>
        <taxon>Clostridium</taxon>
    </lineage>
</organism>
<accession>A6LSM8</accession>
<protein>
    <recommendedName>
        <fullName evidence="1">Small ribosomal subunit protein bS16</fullName>
    </recommendedName>
    <alternativeName>
        <fullName evidence="2">30S ribosomal protein S16</fullName>
    </alternativeName>
</protein>